<accession>Q1WSB4</accession>
<reference key="1">
    <citation type="journal article" date="2006" name="Proc. Natl. Acad. Sci. U.S.A.">
        <title>Multireplicon genome architecture of Lactobacillus salivarius.</title>
        <authorList>
            <person name="Claesson M.J."/>
            <person name="Li Y."/>
            <person name="Leahy S."/>
            <person name="Canchaya C."/>
            <person name="van Pijkeren J.P."/>
            <person name="Cerdeno-Tarraga A.M."/>
            <person name="Parkhill J."/>
            <person name="Flynn S."/>
            <person name="O'Sullivan G.C."/>
            <person name="Collins J.K."/>
            <person name="Higgins D."/>
            <person name="Shanahan F."/>
            <person name="Fitzgerald G.F."/>
            <person name="van Sinderen D."/>
            <person name="O'Toole P.W."/>
        </authorList>
    </citation>
    <scope>NUCLEOTIDE SEQUENCE [LARGE SCALE GENOMIC DNA]</scope>
    <source>
        <strain>UCC118</strain>
    </source>
</reference>
<feature type="chain" id="PRO_0000306630" description="Small ribosomal subunit protein uS13">
    <location>
        <begin position="1"/>
        <end position="121"/>
    </location>
</feature>
<feature type="region of interest" description="Disordered" evidence="2">
    <location>
        <begin position="93"/>
        <end position="121"/>
    </location>
</feature>
<protein>
    <recommendedName>
        <fullName evidence="1">Small ribosomal subunit protein uS13</fullName>
    </recommendedName>
    <alternativeName>
        <fullName evidence="3">30S ribosomal protein S13</fullName>
    </alternativeName>
</protein>
<comment type="function">
    <text evidence="1">Located at the top of the head of the 30S subunit, it contacts several helices of the 16S rRNA. In the 70S ribosome it contacts the 23S rRNA (bridge B1a) and protein L5 of the 50S subunit (bridge B1b), connecting the 2 subunits; these bridges are implicated in subunit movement. Contacts the tRNAs in the A and P-sites.</text>
</comment>
<comment type="subunit">
    <text evidence="1">Part of the 30S ribosomal subunit. Forms a loose heterodimer with protein S19. Forms two bridges to the 50S subunit in the 70S ribosome.</text>
</comment>
<comment type="similarity">
    <text evidence="1">Belongs to the universal ribosomal protein uS13 family.</text>
</comment>
<keyword id="KW-1185">Reference proteome</keyword>
<keyword id="KW-0687">Ribonucleoprotein</keyword>
<keyword id="KW-0689">Ribosomal protein</keyword>
<keyword id="KW-0694">RNA-binding</keyword>
<keyword id="KW-0699">rRNA-binding</keyword>
<keyword id="KW-0820">tRNA-binding</keyword>
<gene>
    <name evidence="1" type="primary">rpsM</name>
    <name type="ordered locus">LSL_1411</name>
</gene>
<name>RS13_LIGS1</name>
<proteinExistence type="inferred from homology"/>
<organism>
    <name type="scientific">Ligilactobacillus salivarius (strain UCC118)</name>
    <name type="common">Lactobacillus salivarius</name>
    <dbReference type="NCBI Taxonomy" id="362948"/>
    <lineage>
        <taxon>Bacteria</taxon>
        <taxon>Bacillati</taxon>
        <taxon>Bacillota</taxon>
        <taxon>Bacilli</taxon>
        <taxon>Lactobacillales</taxon>
        <taxon>Lactobacillaceae</taxon>
        <taxon>Ligilactobacillus</taxon>
    </lineage>
</organism>
<sequence>MARIAGVDLPRNKRVVIGLTYIYGIGNSTAQKILSEAGVSEDVRVRDLTADQEDKIRAVVDKYKVEGDLRREVSLNIKRLSEIGSYRGLRHRRHLPVRGQNTKNNARTRKGPAVSIAGKKK</sequence>
<dbReference type="EMBL" id="CP000233">
    <property type="protein sequence ID" value="ABE00215.1"/>
    <property type="molecule type" value="Genomic_DNA"/>
</dbReference>
<dbReference type="RefSeq" id="WP_003701333.1">
    <property type="nucleotide sequence ID" value="NC_007929.1"/>
</dbReference>
<dbReference type="RefSeq" id="YP_536298.1">
    <property type="nucleotide sequence ID" value="NC_007929.1"/>
</dbReference>
<dbReference type="SMR" id="Q1WSB4"/>
<dbReference type="STRING" id="362948.LSL_1411"/>
<dbReference type="GeneID" id="89466146"/>
<dbReference type="KEGG" id="lsl:LSL_1411"/>
<dbReference type="PATRIC" id="fig|362948.14.peg.1494"/>
<dbReference type="HOGENOM" id="CLU_103849_1_1_9"/>
<dbReference type="OrthoDB" id="9803610at2"/>
<dbReference type="Proteomes" id="UP000006559">
    <property type="component" value="Chromosome"/>
</dbReference>
<dbReference type="GO" id="GO:0005829">
    <property type="term" value="C:cytosol"/>
    <property type="evidence" value="ECO:0007669"/>
    <property type="project" value="TreeGrafter"/>
</dbReference>
<dbReference type="GO" id="GO:0015935">
    <property type="term" value="C:small ribosomal subunit"/>
    <property type="evidence" value="ECO:0007669"/>
    <property type="project" value="TreeGrafter"/>
</dbReference>
<dbReference type="GO" id="GO:0019843">
    <property type="term" value="F:rRNA binding"/>
    <property type="evidence" value="ECO:0007669"/>
    <property type="project" value="UniProtKB-UniRule"/>
</dbReference>
<dbReference type="GO" id="GO:0003735">
    <property type="term" value="F:structural constituent of ribosome"/>
    <property type="evidence" value="ECO:0007669"/>
    <property type="project" value="InterPro"/>
</dbReference>
<dbReference type="GO" id="GO:0000049">
    <property type="term" value="F:tRNA binding"/>
    <property type="evidence" value="ECO:0007669"/>
    <property type="project" value="UniProtKB-UniRule"/>
</dbReference>
<dbReference type="GO" id="GO:0006412">
    <property type="term" value="P:translation"/>
    <property type="evidence" value="ECO:0007669"/>
    <property type="project" value="UniProtKB-UniRule"/>
</dbReference>
<dbReference type="FunFam" id="1.10.8.50:FF:000001">
    <property type="entry name" value="30S ribosomal protein S13"/>
    <property type="match status" value="1"/>
</dbReference>
<dbReference type="FunFam" id="4.10.910.10:FF:000001">
    <property type="entry name" value="30S ribosomal protein S13"/>
    <property type="match status" value="1"/>
</dbReference>
<dbReference type="Gene3D" id="1.10.8.50">
    <property type="match status" value="1"/>
</dbReference>
<dbReference type="Gene3D" id="4.10.910.10">
    <property type="entry name" value="30s ribosomal protein s13, domain 2"/>
    <property type="match status" value="1"/>
</dbReference>
<dbReference type="HAMAP" id="MF_01315">
    <property type="entry name" value="Ribosomal_uS13"/>
    <property type="match status" value="1"/>
</dbReference>
<dbReference type="InterPro" id="IPR027437">
    <property type="entry name" value="Rbsml_uS13_C"/>
</dbReference>
<dbReference type="InterPro" id="IPR001892">
    <property type="entry name" value="Ribosomal_uS13"/>
</dbReference>
<dbReference type="InterPro" id="IPR010979">
    <property type="entry name" value="Ribosomal_uS13-like_H2TH"/>
</dbReference>
<dbReference type="InterPro" id="IPR019980">
    <property type="entry name" value="Ribosomal_uS13_bac-type"/>
</dbReference>
<dbReference type="InterPro" id="IPR018269">
    <property type="entry name" value="Ribosomal_uS13_CS"/>
</dbReference>
<dbReference type="NCBIfam" id="TIGR03631">
    <property type="entry name" value="uS13_bact"/>
    <property type="match status" value="1"/>
</dbReference>
<dbReference type="PANTHER" id="PTHR10871">
    <property type="entry name" value="30S RIBOSOMAL PROTEIN S13/40S RIBOSOMAL PROTEIN S18"/>
    <property type="match status" value="1"/>
</dbReference>
<dbReference type="PANTHER" id="PTHR10871:SF1">
    <property type="entry name" value="SMALL RIBOSOMAL SUBUNIT PROTEIN US13M"/>
    <property type="match status" value="1"/>
</dbReference>
<dbReference type="Pfam" id="PF00416">
    <property type="entry name" value="Ribosomal_S13"/>
    <property type="match status" value="1"/>
</dbReference>
<dbReference type="PIRSF" id="PIRSF002134">
    <property type="entry name" value="Ribosomal_S13"/>
    <property type="match status" value="1"/>
</dbReference>
<dbReference type="SUPFAM" id="SSF46946">
    <property type="entry name" value="S13-like H2TH domain"/>
    <property type="match status" value="1"/>
</dbReference>
<dbReference type="PROSITE" id="PS00646">
    <property type="entry name" value="RIBOSOMAL_S13_1"/>
    <property type="match status" value="1"/>
</dbReference>
<dbReference type="PROSITE" id="PS50159">
    <property type="entry name" value="RIBOSOMAL_S13_2"/>
    <property type="match status" value="1"/>
</dbReference>
<evidence type="ECO:0000255" key="1">
    <source>
        <dbReference type="HAMAP-Rule" id="MF_01315"/>
    </source>
</evidence>
<evidence type="ECO:0000256" key="2">
    <source>
        <dbReference type="SAM" id="MobiDB-lite"/>
    </source>
</evidence>
<evidence type="ECO:0000305" key="3"/>